<organism>
    <name type="scientific">Staphylococcus haemolyticus (strain JCSC1435)</name>
    <dbReference type="NCBI Taxonomy" id="279808"/>
    <lineage>
        <taxon>Bacteria</taxon>
        <taxon>Bacillati</taxon>
        <taxon>Bacillota</taxon>
        <taxon>Bacilli</taxon>
        <taxon>Bacillales</taxon>
        <taxon>Staphylococcaceae</taxon>
        <taxon>Staphylococcus</taxon>
    </lineage>
</organism>
<feature type="chain" id="PRO_0000060464" description="tRNA (guanine-N(1)-)-methyltransferase">
    <location>
        <begin position="1"/>
        <end position="245"/>
    </location>
</feature>
<feature type="binding site" evidence="1">
    <location>
        <position position="111"/>
    </location>
    <ligand>
        <name>S-adenosyl-L-methionine</name>
        <dbReference type="ChEBI" id="CHEBI:59789"/>
    </ligand>
</feature>
<feature type="binding site" evidence="1">
    <location>
        <begin position="131"/>
        <end position="136"/>
    </location>
    <ligand>
        <name>S-adenosyl-L-methionine</name>
        <dbReference type="ChEBI" id="CHEBI:59789"/>
    </ligand>
</feature>
<name>TRMD_STAHJ</name>
<comment type="function">
    <text evidence="1">Specifically methylates guanosine-37 in various tRNAs.</text>
</comment>
<comment type="catalytic activity">
    <reaction evidence="1">
        <text>guanosine(37) in tRNA + S-adenosyl-L-methionine = N(1)-methylguanosine(37) in tRNA + S-adenosyl-L-homocysteine + H(+)</text>
        <dbReference type="Rhea" id="RHEA:36899"/>
        <dbReference type="Rhea" id="RHEA-COMP:10145"/>
        <dbReference type="Rhea" id="RHEA-COMP:10147"/>
        <dbReference type="ChEBI" id="CHEBI:15378"/>
        <dbReference type="ChEBI" id="CHEBI:57856"/>
        <dbReference type="ChEBI" id="CHEBI:59789"/>
        <dbReference type="ChEBI" id="CHEBI:73542"/>
        <dbReference type="ChEBI" id="CHEBI:74269"/>
        <dbReference type="EC" id="2.1.1.228"/>
    </reaction>
</comment>
<comment type="subunit">
    <text evidence="1">Homodimer.</text>
</comment>
<comment type="subcellular location">
    <subcellularLocation>
        <location evidence="1">Cytoplasm</location>
    </subcellularLocation>
</comment>
<comment type="similarity">
    <text evidence="1">Belongs to the RNA methyltransferase TrmD family.</text>
</comment>
<accession>Q4L5U2</accession>
<evidence type="ECO:0000255" key="1">
    <source>
        <dbReference type="HAMAP-Rule" id="MF_00605"/>
    </source>
</evidence>
<protein>
    <recommendedName>
        <fullName evidence="1">tRNA (guanine-N(1)-)-methyltransferase</fullName>
        <ecNumber evidence="1">2.1.1.228</ecNumber>
    </recommendedName>
    <alternativeName>
        <fullName evidence="1">M1G-methyltransferase</fullName>
    </alternativeName>
    <alternativeName>
        <fullName evidence="1">tRNA [GM37] methyltransferase</fullName>
    </alternativeName>
</protein>
<proteinExistence type="inferred from homology"/>
<dbReference type="EC" id="2.1.1.228" evidence="1"/>
<dbReference type="EMBL" id="AP006716">
    <property type="protein sequence ID" value="BAE04983.1"/>
    <property type="molecule type" value="Genomic_DNA"/>
</dbReference>
<dbReference type="RefSeq" id="WP_011275960.1">
    <property type="nucleotide sequence ID" value="NC_007168.1"/>
</dbReference>
<dbReference type="SMR" id="Q4L5U2"/>
<dbReference type="KEGG" id="sha:SH1674"/>
<dbReference type="eggNOG" id="COG0336">
    <property type="taxonomic scope" value="Bacteria"/>
</dbReference>
<dbReference type="HOGENOM" id="CLU_047363_0_1_9"/>
<dbReference type="OrthoDB" id="9807416at2"/>
<dbReference type="Proteomes" id="UP000000543">
    <property type="component" value="Chromosome"/>
</dbReference>
<dbReference type="GO" id="GO:0005829">
    <property type="term" value="C:cytosol"/>
    <property type="evidence" value="ECO:0007669"/>
    <property type="project" value="TreeGrafter"/>
</dbReference>
<dbReference type="GO" id="GO:0052906">
    <property type="term" value="F:tRNA (guanine(37)-N1)-methyltransferase activity"/>
    <property type="evidence" value="ECO:0007669"/>
    <property type="project" value="UniProtKB-UniRule"/>
</dbReference>
<dbReference type="GO" id="GO:0002939">
    <property type="term" value="P:tRNA N1-guanine methylation"/>
    <property type="evidence" value="ECO:0007669"/>
    <property type="project" value="TreeGrafter"/>
</dbReference>
<dbReference type="CDD" id="cd18080">
    <property type="entry name" value="TrmD-like"/>
    <property type="match status" value="1"/>
</dbReference>
<dbReference type="FunFam" id="1.10.1270.20:FF:000001">
    <property type="entry name" value="tRNA (guanine-N(1)-)-methyltransferase"/>
    <property type="match status" value="1"/>
</dbReference>
<dbReference type="FunFam" id="3.40.1280.10:FF:000001">
    <property type="entry name" value="tRNA (guanine-N(1)-)-methyltransferase"/>
    <property type="match status" value="1"/>
</dbReference>
<dbReference type="Gene3D" id="3.40.1280.10">
    <property type="match status" value="1"/>
</dbReference>
<dbReference type="Gene3D" id="1.10.1270.20">
    <property type="entry name" value="tRNA(m1g37)methyltransferase, domain 2"/>
    <property type="match status" value="1"/>
</dbReference>
<dbReference type="HAMAP" id="MF_00605">
    <property type="entry name" value="TrmD"/>
    <property type="match status" value="1"/>
</dbReference>
<dbReference type="InterPro" id="IPR029028">
    <property type="entry name" value="Alpha/beta_knot_MTases"/>
</dbReference>
<dbReference type="InterPro" id="IPR023148">
    <property type="entry name" value="tRNA_m1G_MeTrfase_C_sf"/>
</dbReference>
<dbReference type="InterPro" id="IPR002649">
    <property type="entry name" value="tRNA_m1G_MeTrfase_TrmD"/>
</dbReference>
<dbReference type="InterPro" id="IPR029026">
    <property type="entry name" value="tRNA_m1G_MTases_N"/>
</dbReference>
<dbReference type="InterPro" id="IPR016009">
    <property type="entry name" value="tRNA_MeTrfase_TRMD/TRM10"/>
</dbReference>
<dbReference type="NCBIfam" id="NF000648">
    <property type="entry name" value="PRK00026.1"/>
    <property type="match status" value="1"/>
</dbReference>
<dbReference type="NCBIfam" id="TIGR00088">
    <property type="entry name" value="trmD"/>
    <property type="match status" value="1"/>
</dbReference>
<dbReference type="PANTHER" id="PTHR46417">
    <property type="entry name" value="TRNA (GUANINE-N(1)-)-METHYLTRANSFERASE"/>
    <property type="match status" value="1"/>
</dbReference>
<dbReference type="PANTHER" id="PTHR46417:SF1">
    <property type="entry name" value="TRNA (GUANINE-N(1)-)-METHYLTRANSFERASE"/>
    <property type="match status" value="1"/>
</dbReference>
<dbReference type="Pfam" id="PF01746">
    <property type="entry name" value="tRNA_m1G_MT"/>
    <property type="match status" value="1"/>
</dbReference>
<dbReference type="PIRSF" id="PIRSF000386">
    <property type="entry name" value="tRNA_mtase"/>
    <property type="match status" value="1"/>
</dbReference>
<dbReference type="SUPFAM" id="SSF75217">
    <property type="entry name" value="alpha/beta knot"/>
    <property type="match status" value="1"/>
</dbReference>
<sequence length="245" mass="28389">MKIDYLTLFPEMFDGVLNHSILKRAQDKEIISVNTVNFRDYAINKHNQVDDYPFGGGQGMVLKPEPVFNAMKDLQRTDQTRVILMCPQGRPFSQEIAQELSEAEHIVFICGHYEGYDERIRTHLVTDEISIGDYVLTGGELPAMTMTDAIVRLIPGVLGNQQSHQDDSFSDGLLEFPQYTRPREFENMTVPDVLLSGNHANIEQWRHEQKLIRTYHKRPDLLDRYPLTEDDEKFIESYKKQLKNN</sequence>
<keyword id="KW-0963">Cytoplasm</keyword>
<keyword id="KW-0489">Methyltransferase</keyword>
<keyword id="KW-0949">S-adenosyl-L-methionine</keyword>
<keyword id="KW-0808">Transferase</keyword>
<keyword id="KW-0819">tRNA processing</keyword>
<gene>
    <name evidence="1" type="primary">trmD</name>
    <name type="ordered locus">SH1674</name>
</gene>
<reference key="1">
    <citation type="journal article" date="2005" name="J. Bacteriol.">
        <title>Whole-genome sequencing of Staphylococcus haemolyticus uncovers the extreme plasticity of its genome and the evolution of human-colonizing staphylococcal species.</title>
        <authorList>
            <person name="Takeuchi F."/>
            <person name="Watanabe S."/>
            <person name="Baba T."/>
            <person name="Yuzawa H."/>
            <person name="Ito T."/>
            <person name="Morimoto Y."/>
            <person name="Kuroda M."/>
            <person name="Cui L."/>
            <person name="Takahashi M."/>
            <person name="Ankai A."/>
            <person name="Baba S."/>
            <person name="Fukui S."/>
            <person name="Lee J.C."/>
            <person name="Hiramatsu K."/>
        </authorList>
    </citation>
    <scope>NUCLEOTIDE SEQUENCE [LARGE SCALE GENOMIC DNA]</scope>
    <source>
        <strain>JCSC1435</strain>
    </source>
</reference>